<gene>
    <name type="primary">P</name>
</gene>
<proteinExistence type="inferred from homology"/>
<comment type="function">
    <text evidence="1">Nonenzymatic cofactor regulating the function and conformation of the RNA polymerase and part of the transcription and replication complex. Binds the viral ribonucleocapsid and positions the L polymerase on the template. Acts as a chaperone for newly synthesized free N protein, so-called N(0). Plays a role in virion assembly.</text>
</comment>
<comment type="subunit">
    <text evidence="1 3">Homodimer (By similarity). Interacts with the L polymerase; the association of P and L forms the polymerase complex and positions P optimally for encapsidation of newly synthesized genomes with the nucleoprotein. Interacts (via N-terminus) with N(0). Interacts (via C-terminus) with N in ribonucleocapsid (via C-terminus); this interaction allows to package the L polymerase in the virion and positions the polymerase on the template, since P acts as a bridge between N and L (By similarity).</text>
</comment>
<comment type="subcellular location">
    <subcellularLocation>
        <location evidence="1">Virion</location>
    </subcellularLocation>
    <subcellularLocation>
        <location evidence="1">Host cytoplasm</location>
    </subcellularLocation>
</comment>
<comment type="domain">
    <text evidence="1">The N-terminus is disordered and is involved in binding N(0). The region of interaction with the L polymerase is necessary for transcription. The hinge region is highly variable. The central domain is involved in oligomerization. The C-terminus is basic and essential for binding the N-RNA template.</text>
</comment>
<comment type="similarity">
    <text evidence="5">Belongs to the vesiculovirus protein P family.</text>
</comment>
<organismHost>
    <name type="scientific">Gracilinanus microtarsus</name>
    <name type="common">Brazilian gracile mouse opossum</name>
    <dbReference type="NCBI Taxonomy" id="126289"/>
</organismHost>
<name>PHOSP_PIRYV</name>
<dbReference type="EMBL" id="D26175">
    <property type="protein sequence ID" value="BAA05161.1"/>
    <property type="molecule type" value="Genomic_RNA"/>
</dbReference>
<dbReference type="EMBL" id="Z15093">
    <property type="protein sequence ID" value="CAA78805.1"/>
    <property type="molecule type" value="Genomic_RNA"/>
</dbReference>
<dbReference type="PIR" id="S26647">
    <property type="entry name" value="S26647"/>
</dbReference>
<dbReference type="SMR" id="Q01769"/>
<dbReference type="GO" id="GO:0030430">
    <property type="term" value="C:host cell cytoplasm"/>
    <property type="evidence" value="ECO:0007669"/>
    <property type="project" value="UniProtKB-SubCell"/>
</dbReference>
<dbReference type="GO" id="GO:0044423">
    <property type="term" value="C:virion component"/>
    <property type="evidence" value="ECO:0007669"/>
    <property type="project" value="UniProtKB-KW"/>
</dbReference>
<dbReference type="Gene3D" id="1.10.8.440">
    <property type="entry name" value="Vesicular stomatitis virus phosphoprotein C-terminal domain"/>
    <property type="match status" value="1"/>
</dbReference>
<dbReference type="InterPro" id="IPR043036">
    <property type="entry name" value="Phosphoprotein_C_viral"/>
</dbReference>
<keyword id="KW-0143">Chaperone</keyword>
<keyword id="KW-1035">Host cytoplasm</keyword>
<keyword id="KW-0597">Phosphoprotein</keyword>
<keyword id="KW-0693">Viral RNA replication</keyword>
<keyword id="KW-0946">Virion</keyword>
<organism>
    <name type="scientific">Piry virus</name>
    <name type="common">PIRYV</name>
    <dbReference type="NCBI Taxonomy" id="11274"/>
    <lineage>
        <taxon>Viruses</taxon>
        <taxon>Riboviria</taxon>
        <taxon>Orthornavirae</taxon>
        <taxon>Negarnaviricota</taxon>
        <taxon>Haploviricotina</taxon>
        <taxon>Monjiviricetes</taxon>
        <taxon>Mononegavirales</taxon>
        <taxon>Rhabdoviridae</taxon>
        <taxon>Alpharhabdovirinae</taxon>
        <taxon>Vesiculovirus</taxon>
        <taxon>Vesiculovirus piry</taxon>
    </lineage>
</organism>
<reference key="1">
    <citation type="journal article" date="1992" name="Nucleic Acids Res.">
        <title>The phosphoprotein (P) gene of the rhabdovirus Piry: its cloning, sequencing, and expression in Escherichia coli.</title>
        <authorList>
            <person name="Barik S."/>
        </authorList>
    </citation>
    <scope>NUCLEOTIDE SEQUENCE [GENOMIC RNA]</scope>
</reference>
<protein>
    <recommendedName>
        <fullName>Phosphoprotein</fullName>
        <shortName>Protein P</shortName>
    </recommendedName>
    <alternativeName>
        <fullName>Protein M1</fullName>
    </alternativeName>
</protein>
<sequence>MSSRGRAIQKALANYPDFNQTLSALNEMEEQTEKSFSTFTTLSASNGSSPEYFLGSMLKESDESESVDDDESVNDDLSPENAVEPYKGSEGEDSFGDKDETVFFEEDLPWSAMVQKTVNGKLVAELSAPQGLTPKQLSQWTDSVLALMDLSKNIRLSSAKIDYLASGLKITEHMSSCFSSTAPPLLKEFQPVTLSHRDTSPERGPSSRPSRPTVMPPARTLILENTPSTPTPESTSSASGSPLNLPEIKPPKDWASIAIREFSLNPLSGDGPQYKGTLARLFGSLESALQYANGGNPSTKDMLIAGLRRKGIFNKIRIKYFLDPIYD</sequence>
<feature type="chain" id="PRO_0000222826" description="Phosphoprotein">
    <location>
        <begin position="1"/>
        <end position="327"/>
    </location>
</feature>
<feature type="region of interest" description="Disordered" evidence="4">
    <location>
        <begin position="28"/>
        <end position="96"/>
    </location>
</feature>
<feature type="region of interest" description="Disordered" evidence="4">
    <location>
        <begin position="192"/>
        <end position="246"/>
    </location>
</feature>
<feature type="region of interest" description="Interaction with the Nucleoprotein-RNA and template-binding" evidence="2">
    <location>
        <begin position="302"/>
        <end position="322"/>
    </location>
</feature>
<feature type="compositionally biased region" description="Polar residues" evidence="4">
    <location>
        <begin position="34"/>
        <end position="49"/>
    </location>
</feature>
<feature type="compositionally biased region" description="Acidic residues" evidence="4">
    <location>
        <begin position="62"/>
        <end position="78"/>
    </location>
</feature>
<feature type="compositionally biased region" description="Basic and acidic residues" evidence="4">
    <location>
        <begin position="87"/>
        <end position="96"/>
    </location>
</feature>
<feature type="compositionally biased region" description="Low complexity" evidence="4">
    <location>
        <begin position="202"/>
        <end position="212"/>
    </location>
</feature>
<feature type="compositionally biased region" description="Low complexity" evidence="4">
    <location>
        <begin position="226"/>
        <end position="242"/>
    </location>
</feature>
<feature type="site" description="Involved in oligomerization" evidence="3">
    <location>
        <position position="140"/>
    </location>
</feature>
<feature type="modified residue" description="Phosphotyrosine" evidence="1">
    <location>
        <position position="15"/>
    </location>
</feature>
<feature type="modified residue" description="Phosphoserine; by host" evidence="3">
    <location>
        <position position="284"/>
    </location>
</feature>
<evidence type="ECO:0000250" key="1">
    <source>
        <dbReference type="UniProtKB" id="P03520"/>
    </source>
</evidence>
<evidence type="ECO:0000250" key="2">
    <source>
        <dbReference type="UniProtKB" id="P04877"/>
    </source>
</evidence>
<evidence type="ECO:0000250" key="3">
    <source>
        <dbReference type="UniProtKB" id="P04880"/>
    </source>
</evidence>
<evidence type="ECO:0000256" key="4">
    <source>
        <dbReference type="SAM" id="MobiDB-lite"/>
    </source>
</evidence>
<evidence type="ECO:0000305" key="5"/>
<accession>Q01769</accession>